<gene>
    <name evidence="1" type="primary">fau-1</name>
    <name type="ordered locus">YG5714_1128</name>
</gene>
<dbReference type="EC" id="3.1.26.-" evidence="1"/>
<dbReference type="EMBL" id="CP001403">
    <property type="protein sequence ID" value="ACP45395.1"/>
    <property type="molecule type" value="Genomic_DNA"/>
</dbReference>
<dbReference type="RefSeq" id="WP_012716074.1">
    <property type="nucleotide sequence ID" value="NC_012622.1"/>
</dbReference>
<dbReference type="SMR" id="C3NDK6"/>
<dbReference type="GeneID" id="7806824"/>
<dbReference type="KEGG" id="siy:YG5714_1128"/>
<dbReference type="HOGENOM" id="CLU_044303_0_0_2"/>
<dbReference type="Proteomes" id="UP000002308">
    <property type="component" value="Chromosome"/>
</dbReference>
<dbReference type="GO" id="GO:0035925">
    <property type="term" value="F:mRNA 3'-UTR AU-rich region binding"/>
    <property type="evidence" value="ECO:0007669"/>
    <property type="project" value="UniProtKB-UniRule"/>
</dbReference>
<dbReference type="GO" id="GO:0016891">
    <property type="term" value="F:RNA endonuclease activity, producing 5'-phosphomonoesters"/>
    <property type="evidence" value="ECO:0007669"/>
    <property type="project" value="UniProtKB-UniRule"/>
</dbReference>
<dbReference type="GO" id="GO:0006364">
    <property type="term" value="P:rRNA processing"/>
    <property type="evidence" value="ECO:0007669"/>
    <property type="project" value="UniProtKB-UniRule"/>
</dbReference>
<dbReference type="Gene3D" id="2.40.380.10">
    <property type="entry name" value="FomD-like"/>
    <property type="match status" value="1"/>
</dbReference>
<dbReference type="HAMAP" id="MF_01910">
    <property type="entry name" value="RNA_binding_AU_1"/>
    <property type="match status" value="1"/>
</dbReference>
<dbReference type="InterPro" id="IPR007295">
    <property type="entry name" value="DUF402"/>
</dbReference>
<dbReference type="InterPro" id="IPR035930">
    <property type="entry name" value="FomD-like_sf"/>
</dbReference>
<dbReference type="InterPro" id="IPR050212">
    <property type="entry name" value="Ntdp-like"/>
</dbReference>
<dbReference type="InterPro" id="IPR016730">
    <property type="entry name" value="RNA-bd_FAU-1"/>
</dbReference>
<dbReference type="PANTHER" id="PTHR39159">
    <property type="match status" value="1"/>
</dbReference>
<dbReference type="PANTHER" id="PTHR39159:SF1">
    <property type="entry name" value="UPF0374 PROTEIN YGAC"/>
    <property type="match status" value="1"/>
</dbReference>
<dbReference type="Pfam" id="PF04167">
    <property type="entry name" value="DUF402"/>
    <property type="match status" value="1"/>
</dbReference>
<dbReference type="PIRSF" id="PIRSF018644">
    <property type="entry name" value="RNA-binding_FAU-1"/>
    <property type="match status" value="1"/>
</dbReference>
<dbReference type="SUPFAM" id="SSF159234">
    <property type="entry name" value="FomD-like"/>
    <property type="match status" value="1"/>
</dbReference>
<organism>
    <name type="scientific">Saccharolobus islandicus (strain Y.G.57.14 / Yellowstone #1)</name>
    <name type="common">Sulfolobus islandicus</name>
    <dbReference type="NCBI Taxonomy" id="439386"/>
    <lineage>
        <taxon>Archaea</taxon>
        <taxon>Thermoproteota</taxon>
        <taxon>Thermoprotei</taxon>
        <taxon>Sulfolobales</taxon>
        <taxon>Sulfolobaceae</taxon>
        <taxon>Saccharolobus</taxon>
    </lineage>
</organism>
<protein>
    <recommendedName>
        <fullName evidence="1">Probable ribonuclease FAU-1</fullName>
        <ecNumber evidence="1">3.1.26.-</ecNumber>
    </recommendedName>
    <alternativeName>
        <fullName evidence="1">RNA-binding protein FAU-1</fullName>
    </alternativeName>
</protein>
<comment type="function">
    <text evidence="1">Probable RNase involved in rRNA stability through maturation and/or degradation of precursor rRNAs. Binds to RNA in loop regions with AU-rich sequences.</text>
</comment>
<comment type="similarity">
    <text evidence="1">Belongs to the FAU-1 family.</text>
</comment>
<feature type="chain" id="PRO_1000216190" description="Probable ribonuclease FAU-1">
    <location>
        <begin position="1"/>
        <end position="424"/>
    </location>
</feature>
<sequence>MKGRVRIRGIYATALTSIFSSLSYEIVQQSVEIAERFMREVNNLPADITIKDFEYDRGKIIVMGNGTIEEDLHDVFKYSFHWKSPIKLYSVIEADESCTYGNFKVEPCLEEGIVIKPPYDGKIVLSETKAVSKYAMVWRGKGVTTFSEHINNEEERLRLLTLSSPLNRKGYNVKWRSNAKYATLNELKEDLERLVLRYENREFRDQGEDFYLITLSLPDKLHLDEVRKSIVNTVKYHHLLKLSYNREVDSLEKDKEGSPVKLLEALISDFMKIEHIKADGKAIYLRGGKVIEKEVNNDGYRITLRREINGNGVLDGIGKRIENGDYDIVEYNSDKWYQIHRYYSGIDNSLKGIYINISTPPELLKGKIRYLDLEIDIAIRDSEIIVLDEDELNKKSIYMYSSLVNKAKEVANYLIDCIQQNKLI</sequence>
<keyword id="KW-0255">Endonuclease</keyword>
<keyword id="KW-0378">Hydrolase</keyword>
<keyword id="KW-0540">Nuclease</keyword>
<keyword id="KW-0694">RNA-binding</keyword>
<keyword id="KW-0698">rRNA processing</keyword>
<accession>C3NDK6</accession>
<proteinExistence type="inferred from homology"/>
<name>FAU1_SACI7</name>
<evidence type="ECO:0000255" key="1">
    <source>
        <dbReference type="HAMAP-Rule" id="MF_01910"/>
    </source>
</evidence>
<reference key="1">
    <citation type="journal article" date="2009" name="Proc. Natl. Acad. Sci. U.S.A.">
        <title>Biogeography of the Sulfolobus islandicus pan-genome.</title>
        <authorList>
            <person name="Reno M.L."/>
            <person name="Held N.L."/>
            <person name="Fields C.J."/>
            <person name="Burke P.V."/>
            <person name="Whitaker R.J."/>
        </authorList>
    </citation>
    <scope>NUCLEOTIDE SEQUENCE [LARGE SCALE GENOMIC DNA]</scope>
    <source>
        <strain>Y.G.57.14 / Yellowstone #1</strain>
    </source>
</reference>